<reference evidence="7" key="1">
    <citation type="submission" date="2019-09" db="EMBL/GenBank/DDBJ databases">
        <title>The first chromosomal-level assembly of the common octopus (Octopus vulgaris) genome using long-read sequencing and high-throughput chromosome conformation capture technologies.</title>
        <authorList>
            <person name="Li F."/>
            <person name="Bian L."/>
            <person name="Ge J."/>
            <person name="Duan X."/>
            <person name="Liu Z."/>
            <person name="Li X."/>
            <person name="Liu Y."/>
            <person name="Lin Z."/>
            <person name="Shi H."/>
            <person name="Liu C."/>
            <person name="Chang Q."/>
            <person name="Lu B."/>
            <person name="Zhang S."/>
            <person name="Hu J."/>
            <person name="Xu D."/>
            <person name="Shao C."/>
            <person name="Chen S."/>
        </authorList>
    </citation>
    <scope>NUCLEOTIDE SEQUENCE [LARGE SCALE GENOMIC DNA]</scope>
</reference>
<reference evidence="7" key="2">
    <citation type="journal article" date="1994" name="Biochim. Biophys. Acta">
        <title>Properties of the flavoenzyme D-aspartate oxidase from Octopus vulgaris.</title>
        <authorList>
            <person name="Tedeschi G."/>
            <person name="Negri A."/>
            <person name="Ceciliani F."/>
            <person name="Ronchi S."/>
            <person name="Vetere A."/>
            <person name="D'Aniello G."/>
            <person name="D'Aniello A."/>
        </authorList>
    </citation>
    <scope>PROTEIN SEQUENCE OF 2-29</scope>
    <scope>FUNCTION</scope>
    <scope>CATALYTIC ACTIVITY</scope>
    <scope>COFACTOR</scope>
    <scope>BIOPHYSICOCHEMICAL PROPERTIES</scope>
    <scope>SUBUNIT</scope>
</reference>
<reference evidence="7" key="3">
    <citation type="journal article" date="1993" name="J. Biol. Chem.">
        <title>Biological role of D-amino acid oxidase and D-aspartate oxidase. Effects of D-amino acids.</title>
        <authorList>
            <person name="D'Aniello A."/>
            <person name="D'Onofrio G."/>
            <person name="Pischetola M."/>
            <person name="D'Aniello G."/>
            <person name="Vetere A."/>
            <person name="Petrucelli L."/>
            <person name="Fisher G.H."/>
        </authorList>
    </citation>
    <scope>DEVELOPMENTAL STAGE</scope>
</reference>
<dbReference type="EC" id="1.4.3.1" evidence="6"/>
<dbReference type="SMR" id="A0A7E6FSU6"/>
<dbReference type="Proteomes" id="UP000515154">
    <property type="component" value="Linkage group LG29"/>
</dbReference>
<dbReference type="GO" id="GO:0005782">
    <property type="term" value="C:peroxisomal matrix"/>
    <property type="evidence" value="ECO:0000250"/>
    <property type="project" value="UniProtKB"/>
</dbReference>
<dbReference type="GO" id="GO:0008445">
    <property type="term" value="F:D-aspartate oxidase activity"/>
    <property type="evidence" value="ECO:0000314"/>
    <property type="project" value="UniProtKB"/>
</dbReference>
<dbReference type="GO" id="GO:0071949">
    <property type="term" value="F:FAD binding"/>
    <property type="evidence" value="ECO:0000314"/>
    <property type="project" value="UniProtKB"/>
</dbReference>
<dbReference type="GO" id="GO:0019478">
    <property type="term" value="P:D-amino acid catabolic process"/>
    <property type="evidence" value="ECO:0000314"/>
    <property type="project" value="UniProtKB"/>
</dbReference>
<dbReference type="Gene3D" id="3.30.9.10">
    <property type="entry name" value="D-Amino Acid Oxidase, subunit A, domain 2"/>
    <property type="match status" value="1"/>
</dbReference>
<dbReference type="Gene3D" id="3.40.50.720">
    <property type="entry name" value="NAD(P)-binding Rossmann-like Domain"/>
    <property type="match status" value="1"/>
</dbReference>
<dbReference type="InterPro" id="IPR006181">
    <property type="entry name" value="D-amino_acid_oxidase_CS"/>
</dbReference>
<dbReference type="InterPro" id="IPR023209">
    <property type="entry name" value="DAO"/>
</dbReference>
<dbReference type="InterPro" id="IPR006076">
    <property type="entry name" value="FAD-dep_OxRdtase"/>
</dbReference>
<dbReference type="PANTHER" id="PTHR11530">
    <property type="entry name" value="D-AMINO ACID OXIDASE"/>
    <property type="match status" value="1"/>
</dbReference>
<dbReference type="PANTHER" id="PTHR11530:SF17">
    <property type="entry name" value="RE49860P"/>
    <property type="match status" value="1"/>
</dbReference>
<dbReference type="Pfam" id="PF01266">
    <property type="entry name" value="DAO"/>
    <property type="match status" value="1"/>
</dbReference>
<dbReference type="PIRSF" id="PIRSF000189">
    <property type="entry name" value="D-aa_oxidase"/>
    <property type="match status" value="1"/>
</dbReference>
<dbReference type="SUPFAM" id="SSF54373">
    <property type="entry name" value="FAD-linked reductases, C-terminal domain"/>
    <property type="match status" value="1"/>
</dbReference>
<dbReference type="SUPFAM" id="SSF51971">
    <property type="entry name" value="Nucleotide-binding domain"/>
    <property type="match status" value="1"/>
</dbReference>
<dbReference type="PROSITE" id="PS00677">
    <property type="entry name" value="DAO"/>
    <property type="match status" value="1"/>
</dbReference>
<keyword id="KW-0903">Direct protein sequencing</keyword>
<keyword id="KW-0274">FAD</keyword>
<keyword id="KW-0285">Flavoprotein</keyword>
<keyword id="KW-0560">Oxidoreductase</keyword>
<keyword id="KW-0576">Peroxisome</keyword>
<keyword id="KW-1185">Reference proteome</keyword>
<protein>
    <recommendedName>
        <fullName>D-aspartate oxidase</fullName>
        <shortName evidence="7">DASOX</shortName>
        <shortName evidence="3">DASPO</shortName>
        <shortName evidence="7">DDO</shortName>
        <ecNumber evidence="6">1.4.3.1</ecNumber>
    </recommendedName>
</protein>
<proteinExistence type="evidence at protein level"/>
<accession>A0A7E6FSU6</accession>
<gene>
    <name evidence="7" type="primary">DDO</name>
    <name type="synonym">LOC115226122</name>
</gene>
<organism evidence="8">
    <name type="scientific">Octopus vulgaris</name>
    <name type="common">Common octopus</name>
    <dbReference type="NCBI Taxonomy" id="6645"/>
    <lineage>
        <taxon>Eukaryota</taxon>
        <taxon>Metazoa</taxon>
        <taxon>Spiralia</taxon>
        <taxon>Lophotrochozoa</taxon>
        <taxon>Mollusca</taxon>
        <taxon>Cephalopoda</taxon>
        <taxon>Coleoidea</taxon>
        <taxon>Octopodiformes</taxon>
        <taxon>Octopoda</taxon>
        <taxon>Incirrata</taxon>
        <taxon>Octopodidae</taxon>
        <taxon>Octopus</taxon>
    </lineage>
</organism>
<feature type="chain" id="PRO_0000459788" description="D-aspartate oxidase">
    <location>
        <begin position="1"/>
        <end position="336"/>
    </location>
</feature>
<feature type="short sequence motif" description="Microbody targeting signal" evidence="4">
    <location>
        <begin position="334"/>
        <end position="336"/>
    </location>
</feature>
<feature type="binding site" evidence="3">
    <location>
        <position position="34"/>
    </location>
    <ligand>
        <name>FAD</name>
        <dbReference type="ChEBI" id="CHEBI:57692"/>
    </ligand>
</feature>
<feature type="binding site" evidence="3">
    <location>
        <position position="35"/>
    </location>
    <ligand>
        <name>FAD</name>
        <dbReference type="ChEBI" id="CHEBI:57692"/>
    </ligand>
</feature>
<feature type="binding site" evidence="3">
    <location>
        <position position="41"/>
    </location>
    <ligand>
        <name>FAD</name>
        <dbReference type="ChEBI" id="CHEBI:57692"/>
    </ligand>
</feature>
<feature type="binding site" evidence="3">
    <location>
        <position position="42"/>
    </location>
    <ligand>
        <name>FAD</name>
        <dbReference type="ChEBI" id="CHEBI:57692"/>
    </ligand>
</feature>
<feature type="binding site" evidence="3">
    <location>
        <position position="304"/>
    </location>
    <ligand>
        <name>FAD</name>
        <dbReference type="ChEBI" id="CHEBI:57692"/>
    </ligand>
</feature>
<feature type="binding site" evidence="3">
    <location>
        <position position="308"/>
    </location>
    <ligand>
        <name>FAD</name>
        <dbReference type="ChEBI" id="CHEBI:57692"/>
    </ligand>
</feature>
<feature type="binding site" evidence="3">
    <location>
        <position position="309"/>
    </location>
    <ligand>
        <name>FAD</name>
        <dbReference type="ChEBI" id="CHEBI:57692"/>
    </ligand>
</feature>
<feature type="sequence conflict" description="In Ref. 2; AA sequence." evidence="7" ref="2">
    <original>F</original>
    <variation>I</variation>
    <location>
        <position position="26"/>
    </location>
</feature>
<name>OXDD_OCTVU</name>
<sequence length="336" mass="37653">MVKIAVIGAGVVGLSTALQVKQNFPFCSVTVVAEKFNTETTSDGAGGLFRPNFLTLSANPLESIKQWSQDTFSHFNNLFNSPEASDCGIALMSGFLLSNKEKLDMIEDISLGQSKMTAEQIAKMGFDCKHVTKVLTYTMECRRYMPWLTSKFLSLGGSMHHHRLKSLEELVGVYDVVVNCSGLGAKDLVPDPLVYPVKGQLIQVEAPWVKHFYFFEDDTYVIPNINRTSLGGIRIKNDYSTEVDPEISKSIWQRCTSRIPSLQKAKVLWEWAGLRPHRDPIRIEQDVMNFPKGTLKVVHNYGHGANGVSLSWGTAKHATRLVRQFLENDPELRSKL</sequence>
<comment type="function">
    <text evidence="1 2 6">Selectively catalyzes the oxidative deamination of acidic amino acids (PubMed:7915543). Suppresses the level of D-aspartate in the brain, an amino acid that can act as an agonist for glutamate receptors (By similarity). Protects the organism from the toxicity of D-amino acids (By similarity). May also function in the intestine (By similarity).</text>
</comment>
<comment type="catalytic activity">
    <reaction evidence="6">
        <text>D-aspartate + O2 + H2O = oxaloacetate + H2O2 + NH4(+)</text>
        <dbReference type="Rhea" id="RHEA:12512"/>
        <dbReference type="ChEBI" id="CHEBI:15377"/>
        <dbReference type="ChEBI" id="CHEBI:15379"/>
        <dbReference type="ChEBI" id="CHEBI:16240"/>
        <dbReference type="ChEBI" id="CHEBI:16452"/>
        <dbReference type="ChEBI" id="CHEBI:28938"/>
        <dbReference type="ChEBI" id="CHEBI:29990"/>
        <dbReference type="EC" id="1.4.3.1"/>
    </reaction>
    <physiologicalReaction direction="left-to-right" evidence="6">
        <dbReference type="Rhea" id="RHEA:12513"/>
    </physiologicalReaction>
</comment>
<comment type="catalytic activity">
    <reaction evidence="6">
        <text>D-glutamate + O2 + H2O = H2O2 + 2-oxoglutarate + NH4(+)</text>
        <dbReference type="Rhea" id="RHEA:10028"/>
        <dbReference type="ChEBI" id="CHEBI:15377"/>
        <dbReference type="ChEBI" id="CHEBI:15379"/>
        <dbReference type="ChEBI" id="CHEBI:16240"/>
        <dbReference type="ChEBI" id="CHEBI:16810"/>
        <dbReference type="ChEBI" id="CHEBI:28938"/>
        <dbReference type="ChEBI" id="CHEBI:29986"/>
    </reaction>
    <physiologicalReaction direction="left-to-right" evidence="6">
        <dbReference type="Rhea" id="RHEA:10029"/>
    </physiologicalReaction>
</comment>
<comment type="cofactor">
    <cofactor evidence="6">
        <name>FAD</name>
        <dbReference type="ChEBI" id="CHEBI:57692"/>
    </cofactor>
</comment>
<comment type="biophysicochemical properties">
    <kinetics>
        <KM evidence="6">4.3 mM for D-aspartate (at 25 degrees Celsius and at pH 7)</KM>
        <KM evidence="6">9.7 mM for D-glutamate (at 25 degrees Celsius and at pH 7)</KM>
        <KM evidence="6">47.7 mM for N-methyl D-aspartate(at 25 degrees Celsius and at pH 7)</KM>
        <KM evidence="6">440 mM for D-proline (at 25 degrees Celsius and at pH 7)</KM>
        <KM evidence="6">240 mM for D-asparagine (at 25 degrees Celsius and at pH 7)</KM>
        <KM evidence="6">815 mM for D-glutamine (at 25 degrees Celsius and at pH 7)</KM>
        <text evidence="6">kcat is 6.8 sec(-1) with D-aspartate as substrate (at 25 degrees Celsius and at pH 7) (PubMed:7915543). kcat is 11 sec(-1) with D-glutamate as substrate (at 25 degrees Celsius and at pH 7) (PubMed:7915543). kcat is 2.4 sec(-1) with D-proline as substrate (at 25 degrees Celsius and at pH 7) (PubMed:7915543). kcat is 3.2 sec(-1) with D-proline as substrate (at 25 degrees Celsius and at pH 7) (PubMed:7915543). kcat is 1.1 sec(-1) with D-asparagine as substrate (at 25 degrees Celsius and at pH 7) (PubMed:7915543). kcat is 4.5 sec(-1) with D-glutamine as substrate (at 25 degrees Celsius and at pH 7) (PubMed:7915543).</text>
    </kinetics>
</comment>
<comment type="subunit">
    <text evidence="6">Monomer.</text>
</comment>
<comment type="subcellular location">
    <subcellularLocation>
        <location evidence="3">Peroxisome matrix</location>
    </subcellularLocation>
</comment>
<comment type="developmental stage">
    <text evidence="5">In the liver and kidney, progressively increases during postnatal stages (at protein level).</text>
</comment>
<comment type="miscellaneous">
    <text evidence="6">The enzyme is inactive in complex with 6-hydroxy-flavin adenine dinucleotide (6-OH-FAD); the complex is not physiologically relevant but an artifact of purification procedures.</text>
</comment>
<comment type="similarity">
    <text evidence="7">Belongs to the DAMOX/DASOX family.</text>
</comment>
<evidence type="ECO:0000250" key="1">
    <source>
        <dbReference type="UniProtKB" id="D3ZDM7"/>
    </source>
</evidence>
<evidence type="ECO:0000250" key="2">
    <source>
        <dbReference type="UniProtKB" id="Q922Z0"/>
    </source>
</evidence>
<evidence type="ECO:0000250" key="3">
    <source>
        <dbReference type="UniProtKB" id="Q99489"/>
    </source>
</evidence>
<evidence type="ECO:0000255" key="4"/>
<evidence type="ECO:0000269" key="5">
    <source>
    </source>
</evidence>
<evidence type="ECO:0000269" key="6">
    <source>
    </source>
</evidence>
<evidence type="ECO:0000305" key="7"/>
<evidence type="ECO:0000312" key="8">
    <source>
        <dbReference type="Proteomes" id="UP000515154"/>
    </source>
</evidence>